<dbReference type="EC" id="2.7.11.1" evidence="3"/>
<dbReference type="EMBL" id="DQ864976">
    <property type="protein sequence ID" value="ABI23430.1"/>
    <property type="molecule type" value="mRNA"/>
</dbReference>
<dbReference type="RefSeq" id="NP_001039298.1">
    <property type="nucleotide sequence ID" value="NM_001045833.1"/>
</dbReference>
<dbReference type="SMR" id="Q0GGW5"/>
<dbReference type="FunCoup" id="Q0GGW5">
    <property type="interactions" value="1323"/>
</dbReference>
<dbReference type="STRING" id="9031.ENSGALP00000055443"/>
<dbReference type="GeneID" id="420105"/>
<dbReference type="KEGG" id="gga:420105"/>
<dbReference type="CTD" id="6794"/>
<dbReference type="VEuPathDB" id="HostDB:geneid_420105"/>
<dbReference type="InParanoid" id="Q0GGW5"/>
<dbReference type="OrthoDB" id="68483at2759"/>
<dbReference type="PhylomeDB" id="Q0GGW5"/>
<dbReference type="PRO" id="PR:Q0GGW5"/>
<dbReference type="Proteomes" id="UP000000539">
    <property type="component" value="Unassembled WGS sequence"/>
</dbReference>
<dbReference type="GO" id="GO:0005737">
    <property type="term" value="C:cytoplasm"/>
    <property type="evidence" value="ECO:0000250"/>
    <property type="project" value="UniProtKB"/>
</dbReference>
<dbReference type="GO" id="GO:0005829">
    <property type="term" value="C:cytosol"/>
    <property type="evidence" value="ECO:0000250"/>
    <property type="project" value="UniProtKB"/>
</dbReference>
<dbReference type="GO" id="GO:0016020">
    <property type="term" value="C:membrane"/>
    <property type="evidence" value="ECO:0000250"/>
    <property type="project" value="UniProtKB"/>
</dbReference>
<dbReference type="GO" id="GO:0005739">
    <property type="term" value="C:mitochondrion"/>
    <property type="evidence" value="ECO:0000250"/>
    <property type="project" value="UniProtKB"/>
</dbReference>
<dbReference type="GO" id="GO:0005634">
    <property type="term" value="C:nucleus"/>
    <property type="evidence" value="ECO:0000250"/>
    <property type="project" value="UniProtKB"/>
</dbReference>
<dbReference type="GO" id="GO:0005524">
    <property type="term" value="F:ATP binding"/>
    <property type="evidence" value="ECO:0000250"/>
    <property type="project" value="UniProtKB"/>
</dbReference>
<dbReference type="GO" id="GO:0000287">
    <property type="term" value="F:magnesium ion binding"/>
    <property type="evidence" value="ECO:0000250"/>
    <property type="project" value="UniProtKB"/>
</dbReference>
<dbReference type="GO" id="GO:0002039">
    <property type="term" value="F:p53 binding"/>
    <property type="evidence" value="ECO:0000250"/>
    <property type="project" value="UniProtKB"/>
</dbReference>
<dbReference type="GO" id="GO:0030295">
    <property type="term" value="F:protein kinase activator activity"/>
    <property type="evidence" value="ECO:0000250"/>
    <property type="project" value="UniProtKB"/>
</dbReference>
<dbReference type="GO" id="GO:0019901">
    <property type="term" value="F:protein kinase binding"/>
    <property type="evidence" value="ECO:0000353"/>
    <property type="project" value="AgBase"/>
</dbReference>
<dbReference type="GO" id="GO:0106310">
    <property type="term" value="F:protein serine kinase activity"/>
    <property type="evidence" value="ECO:0007669"/>
    <property type="project" value="RHEA"/>
</dbReference>
<dbReference type="GO" id="GO:0004674">
    <property type="term" value="F:protein serine/threonine kinase activity"/>
    <property type="evidence" value="ECO:0000250"/>
    <property type="project" value="UniProtKB"/>
</dbReference>
<dbReference type="GO" id="GO:0032147">
    <property type="term" value="P:activation of protein kinase activity"/>
    <property type="evidence" value="ECO:0000250"/>
    <property type="project" value="UniProtKB"/>
</dbReference>
<dbReference type="GO" id="GO:0009267">
    <property type="term" value="P:cellular response to starvation"/>
    <property type="evidence" value="ECO:0000314"/>
    <property type="project" value="AgBase"/>
</dbReference>
<dbReference type="GO" id="GO:0006974">
    <property type="term" value="P:DNA damage response"/>
    <property type="evidence" value="ECO:0000318"/>
    <property type="project" value="GO_Central"/>
</dbReference>
<dbReference type="GO" id="GO:0030010">
    <property type="term" value="P:establishment of cell polarity"/>
    <property type="evidence" value="ECO:0000250"/>
    <property type="project" value="UniProtKB"/>
</dbReference>
<dbReference type="GO" id="GO:0042593">
    <property type="term" value="P:glucose homeostasis"/>
    <property type="evidence" value="ECO:0000250"/>
    <property type="project" value="UniProtKB"/>
</dbReference>
<dbReference type="GO" id="GO:0072332">
    <property type="term" value="P:intrinsic apoptotic signaling pathway by p53 class mediator"/>
    <property type="evidence" value="ECO:0000250"/>
    <property type="project" value="UniProtKB"/>
</dbReference>
<dbReference type="GO" id="GO:0090090">
    <property type="term" value="P:negative regulation of canonical Wnt signaling pathway"/>
    <property type="evidence" value="ECO:0000250"/>
    <property type="project" value="UniProtKB"/>
</dbReference>
<dbReference type="GO" id="GO:0030308">
    <property type="term" value="P:negative regulation of cell growth"/>
    <property type="evidence" value="ECO:0000250"/>
    <property type="project" value="UniProtKB"/>
</dbReference>
<dbReference type="GO" id="GO:1901610">
    <property type="term" value="P:positive regulation of vesicle transport along microtubule"/>
    <property type="evidence" value="ECO:0000318"/>
    <property type="project" value="GO_Central"/>
</dbReference>
<dbReference type="GO" id="GO:0046777">
    <property type="term" value="P:protein autophosphorylation"/>
    <property type="evidence" value="ECO:0000250"/>
    <property type="project" value="UniProtKB"/>
</dbReference>
<dbReference type="GO" id="GO:0006470">
    <property type="term" value="P:protein dephosphorylation"/>
    <property type="evidence" value="ECO:0000250"/>
    <property type="project" value="UniProtKB"/>
</dbReference>
<dbReference type="GO" id="GO:0006468">
    <property type="term" value="P:protein phosphorylation"/>
    <property type="evidence" value="ECO:0000250"/>
    <property type="project" value="UniProtKB"/>
</dbReference>
<dbReference type="GO" id="GO:0001558">
    <property type="term" value="P:regulation of cell growth"/>
    <property type="evidence" value="ECO:0000250"/>
    <property type="project" value="UniProtKB"/>
</dbReference>
<dbReference type="GO" id="GO:0030111">
    <property type="term" value="P:regulation of Wnt signaling pathway"/>
    <property type="evidence" value="ECO:0000318"/>
    <property type="project" value="GO_Central"/>
</dbReference>
<dbReference type="GO" id="GO:0010212">
    <property type="term" value="P:response to ionizing radiation"/>
    <property type="evidence" value="ECO:0000250"/>
    <property type="project" value="UniProtKB"/>
</dbReference>
<dbReference type="GO" id="GO:0009410">
    <property type="term" value="P:response to xenobiotic stimulus"/>
    <property type="evidence" value="ECO:0000314"/>
    <property type="project" value="AgBase"/>
</dbReference>
<dbReference type="GO" id="GO:0007165">
    <property type="term" value="P:signal transduction"/>
    <property type="evidence" value="ECO:0000318"/>
    <property type="project" value="GO_Central"/>
</dbReference>
<dbReference type="GO" id="GO:0001944">
    <property type="term" value="P:vasculature development"/>
    <property type="evidence" value="ECO:0000250"/>
    <property type="project" value="UniProtKB"/>
</dbReference>
<dbReference type="CDD" id="cd14119">
    <property type="entry name" value="STKc_LKB1"/>
    <property type="match status" value="1"/>
</dbReference>
<dbReference type="FunFam" id="1.10.510.10:FF:000245">
    <property type="entry name" value="serine/threonine-protein kinase STK11"/>
    <property type="match status" value="1"/>
</dbReference>
<dbReference type="FunFam" id="3.30.200.20:FF:000235">
    <property type="entry name" value="serine/threonine-protein kinase STK11"/>
    <property type="match status" value="1"/>
</dbReference>
<dbReference type="Gene3D" id="3.30.200.20">
    <property type="entry name" value="Phosphorylase Kinase, domain 1"/>
    <property type="match status" value="1"/>
</dbReference>
<dbReference type="Gene3D" id="1.10.510.10">
    <property type="entry name" value="Transferase(Phosphotransferase) domain 1"/>
    <property type="match status" value="1"/>
</dbReference>
<dbReference type="InterPro" id="IPR011009">
    <property type="entry name" value="Kinase-like_dom_sf"/>
</dbReference>
<dbReference type="InterPro" id="IPR039154">
    <property type="entry name" value="LKB1_c"/>
</dbReference>
<dbReference type="InterPro" id="IPR000719">
    <property type="entry name" value="Prot_kinase_dom"/>
</dbReference>
<dbReference type="InterPro" id="IPR017441">
    <property type="entry name" value="Protein_kinase_ATP_BS"/>
</dbReference>
<dbReference type="InterPro" id="IPR008271">
    <property type="entry name" value="Ser/Thr_kinase_AS"/>
</dbReference>
<dbReference type="PANTHER" id="PTHR24346">
    <property type="entry name" value="MAP/MICROTUBULE AFFINITY-REGULATING KINASE"/>
    <property type="match status" value="1"/>
</dbReference>
<dbReference type="PANTHER" id="PTHR24346:SF94">
    <property type="entry name" value="NON-SPECIFIC SERINE_THREONINE PROTEIN KINASE"/>
    <property type="match status" value="1"/>
</dbReference>
<dbReference type="Pfam" id="PF00069">
    <property type="entry name" value="Pkinase"/>
    <property type="match status" value="1"/>
</dbReference>
<dbReference type="SMART" id="SM00220">
    <property type="entry name" value="S_TKc"/>
    <property type="match status" value="1"/>
</dbReference>
<dbReference type="SUPFAM" id="SSF56112">
    <property type="entry name" value="Protein kinase-like (PK-like)"/>
    <property type="match status" value="1"/>
</dbReference>
<dbReference type="PROSITE" id="PS00107">
    <property type="entry name" value="PROTEIN_KINASE_ATP"/>
    <property type="match status" value="1"/>
</dbReference>
<dbReference type="PROSITE" id="PS50011">
    <property type="entry name" value="PROTEIN_KINASE_DOM"/>
    <property type="match status" value="1"/>
</dbReference>
<dbReference type="PROSITE" id="PS00108">
    <property type="entry name" value="PROTEIN_KINASE_ST"/>
    <property type="match status" value="1"/>
</dbReference>
<accession>Q0GGW5</accession>
<feature type="chain" id="PRO_0000260033" description="Serine/threonine-protein kinase STK11">
    <location>
        <begin position="1"/>
        <end position="440"/>
    </location>
</feature>
<feature type="domain" description="Protein kinase" evidence="4">
    <location>
        <begin position="49"/>
        <end position="309"/>
    </location>
</feature>
<feature type="region of interest" description="Disordered" evidence="6">
    <location>
        <begin position="370"/>
        <end position="440"/>
    </location>
</feature>
<feature type="compositionally biased region" description="Basic residues" evidence="6">
    <location>
        <begin position="430"/>
        <end position="440"/>
    </location>
</feature>
<feature type="active site" description="Proton acceptor" evidence="2 4 5">
    <location>
        <position position="176"/>
    </location>
</feature>
<feature type="binding site" evidence="2 4">
    <location>
        <begin position="55"/>
        <end position="63"/>
    </location>
    <ligand>
        <name>ATP</name>
        <dbReference type="ChEBI" id="CHEBI:30616"/>
    </ligand>
</feature>
<feature type="binding site" evidence="2 4">
    <location>
        <position position="78"/>
    </location>
    <ligand>
        <name>ATP</name>
        <dbReference type="ChEBI" id="CHEBI:30616"/>
    </ligand>
</feature>
<feature type="modified residue" description="Phosphothreonine; by autocatalysis" evidence="1">
    <location>
        <position position="336"/>
    </location>
</feature>
<feature type="modified residue" description="Phosphothreonine; by autocatalysis" evidence="1">
    <location>
        <position position="365"/>
    </location>
</feature>
<feature type="modified residue" description="Phosphoserine; by PKA" evidence="1">
    <location>
        <position position="435"/>
    </location>
</feature>
<evidence type="ECO:0000250" key="1"/>
<evidence type="ECO:0000250" key="2">
    <source>
        <dbReference type="UniProtKB" id="P28523"/>
    </source>
</evidence>
<evidence type="ECO:0000250" key="3">
    <source>
        <dbReference type="UniProtKB" id="Q15831"/>
    </source>
</evidence>
<evidence type="ECO:0000255" key="4">
    <source>
        <dbReference type="PROSITE-ProRule" id="PRU00159"/>
    </source>
</evidence>
<evidence type="ECO:0000255" key="5">
    <source>
        <dbReference type="PROSITE-ProRule" id="PRU10027"/>
    </source>
</evidence>
<evidence type="ECO:0000256" key="6">
    <source>
        <dbReference type="SAM" id="MobiDB-lite"/>
    </source>
</evidence>
<evidence type="ECO:0000269" key="7">
    <source>
    </source>
</evidence>
<evidence type="ECO:0000305" key="8"/>
<evidence type="ECO:0000312" key="9">
    <source>
        <dbReference type="EMBL" id="ABI23430.1"/>
    </source>
</evidence>
<keyword id="KW-0053">Apoptosis</keyword>
<keyword id="KW-0067">ATP-binding</keyword>
<keyword id="KW-0131">Cell cycle</keyword>
<keyword id="KW-0963">Cytoplasm</keyword>
<keyword id="KW-0227">DNA damage</keyword>
<keyword id="KW-0418">Kinase</keyword>
<keyword id="KW-0460">Magnesium</keyword>
<keyword id="KW-0464">Manganese</keyword>
<keyword id="KW-0479">Metal-binding</keyword>
<keyword id="KW-0547">Nucleotide-binding</keyword>
<keyword id="KW-0539">Nucleus</keyword>
<keyword id="KW-0597">Phosphoprotein</keyword>
<keyword id="KW-1185">Reference proteome</keyword>
<keyword id="KW-0723">Serine/threonine-protein kinase</keyword>
<keyword id="KW-0808">Transferase</keyword>
<keyword id="KW-0043">Tumor suppressor</keyword>
<sequence length="440" mass="49793">MDMQESQQLGMFGESELMSVGMDTFIHRIDSTEVIYQPRRKRAKLIGKYLMGDLLGEGSYGKVKEMLDSETLCRRAVKILKKKKLRRIPNGEANVKKEIQLLRRLRHKNVIQLVDVLYNEEKQKMYMVMEYCVCGMQEMLDSVPEKRFPVFQAHGYFCQLIDGLEYLHSQGIVHKDIKPGNLLLTTNGTLKISDLGVAEALHPFAEDDTCRTSQGSPAFQPPEIANGLDTFSGFKVDIWSAGVTLYNITTGLYPFEGDNIYKLFENIGKGDFTIPEDCGPPLSDLLRGMLEYDPAKRFSIQQIRQHNWFRKKHAQAETLVPIPPSPETKDKWRSMTAVPYLEDLHGYNEDEDDDLYDIEDDIIYTQDFTVPGQVPEEEAGQNGQSRGRGLPKAICMNGTEPGQLSTKSKAERRASASSNPSRKACSASSKIRKLSTCKQQ</sequence>
<gene>
    <name evidence="3 9" type="primary">STK11</name>
</gene>
<protein>
    <recommendedName>
        <fullName evidence="3">Serine/threonine-protein kinase STK11</fullName>
        <ecNumber evidence="3">2.7.11.1</ecNumber>
    </recommendedName>
    <alternativeName>
        <fullName>Liver kinase B1 homolog</fullName>
        <shortName>LKB1</shortName>
    </alternativeName>
</protein>
<organism>
    <name type="scientific">Gallus gallus</name>
    <name type="common">Chicken</name>
    <dbReference type="NCBI Taxonomy" id="9031"/>
    <lineage>
        <taxon>Eukaryota</taxon>
        <taxon>Metazoa</taxon>
        <taxon>Chordata</taxon>
        <taxon>Craniata</taxon>
        <taxon>Vertebrata</taxon>
        <taxon>Euteleostomi</taxon>
        <taxon>Archelosauria</taxon>
        <taxon>Archosauria</taxon>
        <taxon>Dinosauria</taxon>
        <taxon>Saurischia</taxon>
        <taxon>Theropoda</taxon>
        <taxon>Coelurosauria</taxon>
        <taxon>Aves</taxon>
        <taxon>Neognathae</taxon>
        <taxon>Galloanserae</taxon>
        <taxon>Galliformes</taxon>
        <taxon>Phasianidae</taxon>
        <taxon>Phasianinae</taxon>
        <taxon>Gallus</taxon>
    </lineage>
</organism>
<proteinExistence type="evidence at transcript level"/>
<name>STK11_CHICK</name>
<comment type="function">
    <text evidence="1">Tumor suppressor serine/threonine-protein kinase that controls the activity of AMP-activated protein kinase (AMPK) family members, thereby playing a role in various processes such as cell metabolism, cell polarity, apoptosis and DNA damage response. Acts by phosphorylating the T-loop of AMPK family proteins, leading to promote their activity (By similarity).</text>
</comment>
<comment type="catalytic activity">
    <reaction evidence="3">
        <text>L-seryl-[protein] + ATP = O-phospho-L-seryl-[protein] + ADP + H(+)</text>
        <dbReference type="Rhea" id="RHEA:17989"/>
        <dbReference type="Rhea" id="RHEA-COMP:9863"/>
        <dbReference type="Rhea" id="RHEA-COMP:11604"/>
        <dbReference type="ChEBI" id="CHEBI:15378"/>
        <dbReference type="ChEBI" id="CHEBI:29999"/>
        <dbReference type="ChEBI" id="CHEBI:30616"/>
        <dbReference type="ChEBI" id="CHEBI:83421"/>
        <dbReference type="ChEBI" id="CHEBI:456216"/>
        <dbReference type="EC" id="2.7.11.1"/>
    </reaction>
</comment>
<comment type="catalytic activity">
    <reaction evidence="3">
        <text>L-threonyl-[protein] + ATP = O-phospho-L-threonyl-[protein] + ADP + H(+)</text>
        <dbReference type="Rhea" id="RHEA:46608"/>
        <dbReference type="Rhea" id="RHEA-COMP:11060"/>
        <dbReference type="Rhea" id="RHEA-COMP:11605"/>
        <dbReference type="ChEBI" id="CHEBI:15378"/>
        <dbReference type="ChEBI" id="CHEBI:30013"/>
        <dbReference type="ChEBI" id="CHEBI:30616"/>
        <dbReference type="ChEBI" id="CHEBI:61977"/>
        <dbReference type="ChEBI" id="CHEBI:456216"/>
        <dbReference type="EC" id="2.7.11.1"/>
    </reaction>
</comment>
<comment type="cofactor">
    <cofactor evidence="3">
        <name>Mg(2+)</name>
        <dbReference type="ChEBI" id="CHEBI:18420"/>
    </cofactor>
    <cofactor evidence="3">
        <name>Mn(2+)</name>
        <dbReference type="ChEBI" id="CHEBI:29035"/>
    </cofactor>
</comment>
<comment type="subunit">
    <text evidence="1">Catalytic component of a trimeric complex composed of STK11/LKB1, STRAD (STRADA or STRADB) and CAB39/MO25 (CAB39/MO25alpha or CAB39L/MO25beta).</text>
</comment>
<comment type="subcellular location">
    <subcellularLocation>
        <location evidence="1">Nucleus</location>
    </subcellularLocation>
    <subcellularLocation>
        <location evidence="1">Cytoplasm</location>
    </subcellularLocation>
</comment>
<comment type="tissue specificity">
    <text evidence="7">Ubiquitously expressed in all tissues tested. High levels were observed in duodenum and skeletal muscle, lower levels in liver and pancreas.</text>
</comment>
<comment type="similarity">
    <text evidence="8">Belongs to the protein kinase superfamily. CAMK Ser/Thr protein kinase family. LKB1 subfamily.</text>
</comment>
<reference evidence="8 9" key="1">
    <citation type="journal article" date="2006" name="Comp. Biochem. Physiol.">
        <title>Characterization of the AMP-activated protein kinase pathway in chickens.</title>
        <authorList>
            <person name="Proszkowiec-Weglarz M."/>
            <person name="Richards M.P."/>
            <person name="Ramachandran R."/>
            <person name="McMurtry J.P."/>
        </authorList>
    </citation>
    <scope>NUCLEOTIDE SEQUENCE [MRNA]</scope>
    <scope>TISSUE SPECIFICITY</scope>
    <source>
        <tissue evidence="9">Duodenum</tissue>
    </source>
</reference>